<accession>B0BC83</accession>
<comment type="function">
    <text evidence="1">Catalyzes the attachment of glutamate to tRNA(Glu) in a two-step reaction: glutamate is first activated by ATP to form Glu-AMP and then transferred to the acceptor end of tRNA(Glu).</text>
</comment>
<comment type="catalytic activity">
    <reaction evidence="1">
        <text>tRNA(Glu) + L-glutamate + ATP = L-glutamyl-tRNA(Glu) + AMP + diphosphate</text>
        <dbReference type="Rhea" id="RHEA:23540"/>
        <dbReference type="Rhea" id="RHEA-COMP:9663"/>
        <dbReference type="Rhea" id="RHEA-COMP:9680"/>
        <dbReference type="ChEBI" id="CHEBI:29985"/>
        <dbReference type="ChEBI" id="CHEBI:30616"/>
        <dbReference type="ChEBI" id="CHEBI:33019"/>
        <dbReference type="ChEBI" id="CHEBI:78442"/>
        <dbReference type="ChEBI" id="CHEBI:78520"/>
        <dbReference type="ChEBI" id="CHEBI:456215"/>
        <dbReference type="EC" id="6.1.1.17"/>
    </reaction>
</comment>
<comment type="subunit">
    <text evidence="1">Monomer.</text>
</comment>
<comment type="subcellular location">
    <subcellularLocation>
        <location evidence="1">Cytoplasm</location>
    </subcellularLocation>
</comment>
<comment type="similarity">
    <text evidence="1">Belongs to the class-I aminoacyl-tRNA synthetase family. Glutamate--tRNA ligase type 1 subfamily.</text>
</comment>
<evidence type="ECO:0000255" key="1">
    <source>
        <dbReference type="HAMAP-Rule" id="MF_00022"/>
    </source>
</evidence>
<sequence length="506" mass="58563">MTVQNVRVRVAPSPTGDPHVGTAYMALFNEVFARKYNGQMILRIEDTDQTRSRDDYEANIFSALKWCGIRWDEGPDVGGAYGPYRQSERTEIYKKYAEILLQTDCAYKCFATPQELQEMRAVASTLGYRGGYDRRYRYLSPEEVRQREEQGQPYTIRLKVPLTGESVFEDQCKGRVVFPWADVDDQVLVKSDGFPTYHFANVVDDHLMGITHVLRGEEWLSSTPKHLLLYKAFGWEPPQFFHMPLLLNPDGSKLSKRKNPTSIFYYRDAGYKKEAFMNFLTLMGYSMEGDEEIYSMQRLIEAFDPKRIGRSGAVFDIRKLDWMNKHYLNHEGSPESLLQELKGWLWNDEFLLKILPLCQSRITTLADFVGLTSFFFTAIPQYSKEELLPSSLKQEQAAVMLYSLVKYLEKKDLWEKDFFYQGSKWLAEAFQVHHKKAVIPLLYVAITGAKQGLPLFDSMELLGKARTRARLTYAQNLLGGVSKKVQQQVDKALQDQPLEDIRFLDF</sequence>
<protein>
    <recommendedName>
        <fullName evidence="1">Glutamate--tRNA ligase</fullName>
        <ecNumber evidence="1">6.1.1.17</ecNumber>
    </recommendedName>
    <alternativeName>
        <fullName evidence="1">Glutamyl-tRNA synthetase</fullName>
        <shortName evidence="1">GluRS</shortName>
    </alternativeName>
</protein>
<organism>
    <name type="scientific">Chlamydia trachomatis serovar L2b (strain UCH-1/proctitis)</name>
    <dbReference type="NCBI Taxonomy" id="471473"/>
    <lineage>
        <taxon>Bacteria</taxon>
        <taxon>Pseudomonadati</taxon>
        <taxon>Chlamydiota</taxon>
        <taxon>Chlamydiia</taxon>
        <taxon>Chlamydiales</taxon>
        <taxon>Chlamydiaceae</taxon>
        <taxon>Chlamydia/Chlamydophila group</taxon>
        <taxon>Chlamydia</taxon>
    </lineage>
</organism>
<feature type="chain" id="PRO_1000090065" description="Glutamate--tRNA ligase">
    <location>
        <begin position="1"/>
        <end position="506"/>
    </location>
</feature>
<feature type="short sequence motif" description="'HIGH' region" evidence="1">
    <location>
        <begin position="12"/>
        <end position="22"/>
    </location>
</feature>
<feature type="short sequence motif" description="'KMSKS' region" evidence="1">
    <location>
        <begin position="253"/>
        <end position="257"/>
    </location>
</feature>
<feature type="binding site" evidence="1">
    <location>
        <position position="256"/>
    </location>
    <ligand>
        <name>ATP</name>
        <dbReference type="ChEBI" id="CHEBI:30616"/>
    </ligand>
</feature>
<keyword id="KW-0030">Aminoacyl-tRNA synthetase</keyword>
<keyword id="KW-0067">ATP-binding</keyword>
<keyword id="KW-0963">Cytoplasm</keyword>
<keyword id="KW-0436">Ligase</keyword>
<keyword id="KW-0547">Nucleotide-binding</keyword>
<keyword id="KW-0648">Protein biosynthesis</keyword>
<dbReference type="EC" id="6.1.1.17" evidence="1"/>
<dbReference type="EMBL" id="AM884177">
    <property type="protein sequence ID" value="CAP07098.1"/>
    <property type="molecule type" value="Genomic_DNA"/>
</dbReference>
<dbReference type="RefSeq" id="WP_009873815.1">
    <property type="nucleotide sequence ID" value="NC_010280.2"/>
</dbReference>
<dbReference type="SMR" id="B0BC83"/>
<dbReference type="KEGG" id="ctl:CTLon_0701"/>
<dbReference type="HOGENOM" id="CLU_015768_6_3_0"/>
<dbReference type="Proteomes" id="UP001154401">
    <property type="component" value="Chromosome"/>
</dbReference>
<dbReference type="GO" id="GO:0005829">
    <property type="term" value="C:cytosol"/>
    <property type="evidence" value="ECO:0007669"/>
    <property type="project" value="TreeGrafter"/>
</dbReference>
<dbReference type="GO" id="GO:0005524">
    <property type="term" value="F:ATP binding"/>
    <property type="evidence" value="ECO:0007669"/>
    <property type="project" value="UniProtKB-UniRule"/>
</dbReference>
<dbReference type="GO" id="GO:0004818">
    <property type="term" value="F:glutamate-tRNA ligase activity"/>
    <property type="evidence" value="ECO:0007669"/>
    <property type="project" value="UniProtKB-UniRule"/>
</dbReference>
<dbReference type="GO" id="GO:0000049">
    <property type="term" value="F:tRNA binding"/>
    <property type="evidence" value="ECO:0007669"/>
    <property type="project" value="InterPro"/>
</dbReference>
<dbReference type="GO" id="GO:0008270">
    <property type="term" value="F:zinc ion binding"/>
    <property type="evidence" value="ECO:0007669"/>
    <property type="project" value="InterPro"/>
</dbReference>
<dbReference type="GO" id="GO:0006424">
    <property type="term" value="P:glutamyl-tRNA aminoacylation"/>
    <property type="evidence" value="ECO:0007669"/>
    <property type="project" value="UniProtKB-UniRule"/>
</dbReference>
<dbReference type="CDD" id="cd00808">
    <property type="entry name" value="GluRS_core"/>
    <property type="match status" value="1"/>
</dbReference>
<dbReference type="FunFam" id="1.10.10.350:FF:000014">
    <property type="entry name" value="Glutamate--tRNA ligase"/>
    <property type="match status" value="1"/>
</dbReference>
<dbReference type="FunFam" id="3.40.50.620:FF:000329">
    <property type="entry name" value="Glutamate--tRNA ligase"/>
    <property type="match status" value="1"/>
</dbReference>
<dbReference type="Gene3D" id="1.10.10.350">
    <property type="match status" value="1"/>
</dbReference>
<dbReference type="Gene3D" id="3.40.50.620">
    <property type="entry name" value="HUPs"/>
    <property type="match status" value="1"/>
</dbReference>
<dbReference type="HAMAP" id="MF_00022">
    <property type="entry name" value="Glu_tRNA_synth_type1"/>
    <property type="match status" value="1"/>
</dbReference>
<dbReference type="InterPro" id="IPR045462">
    <property type="entry name" value="aa-tRNA-synth_I_cd-bd"/>
</dbReference>
<dbReference type="InterPro" id="IPR020751">
    <property type="entry name" value="aa-tRNA-synth_I_codon-bd_sub2"/>
</dbReference>
<dbReference type="InterPro" id="IPR001412">
    <property type="entry name" value="aa-tRNA-synth_I_CS"/>
</dbReference>
<dbReference type="InterPro" id="IPR008925">
    <property type="entry name" value="aa_tRNA-synth_I_cd-bd_sf"/>
</dbReference>
<dbReference type="InterPro" id="IPR004527">
    <property type="entry name" value="Glu-tRNA-ligase_bac/mito"/>
</dbReference>
<dbReference type="InterPro" id="IPR000924">
    <property type="entry name" value="Glu/Gln-tRNA-synth"/>
</dbReference>
<dbReference type="InterPro" id="IPR020058">
    <property type="entry name" value="Glu/Gln-tRNA-synth_Ib_cat-dom"/>
</dbReference>
<dbReference type="InterPro" id="IPR049940">
    <property type="entry name" value="GluQ/Sye"/>
</dbReference>
<dbReference type="InterPro" id="IPR033910">
    <property type="entry name" value="GluRS_core"/>
</dbReference>
<dbReference type="InterPro" id="IPR014729">
    <property type="entry name" value="Rossmann-like_a/b/a_fold"/>
</dbReference>
<dbReference type="NCBIfam" id="TIGR00464">
    <property type="entry name" value="gltX_bact"/>
    <property type="match status" value="1"/>
</dbReference>
<dbReference type="PANTHER" id="PTHR43311">
    <property type="entry name" value="GLUTAMATE--TRNA LIGASE"/>
    <property type="match status" value="1"/>
</dbReference>
<dbReference type="PANTHER" id="PTHR43311:SF2">
    <property type="entry name" value="GLUTAMATE--TRNA LIGASE, MITOCHONDRIAL-RELATED"/>
    <property type="match status" value="1"/>
</dbReference>
<dbReference type="Pfam" id="PF19269">
    <property type="entry name" value="Anticodon_2"/>
    <property type="match status" value="1"/>
</dbReference>
<dbReference type="Pfam" id="PF00749">
    <property type="entry name" value="tRNA-synt_1c"/>
    <property type="match status" value="1"/>
</dbReference>
<dbReference type="PRINTS" id="PR00987">
    <property type="entry name" value="TRNASYNTHGLU"/>
</dbReference>
<dbReference type="SUPFAM" id="SSF48163">
    <property type="entry name" value="An anticodon-binding domain of class I aminoacyl-tRNA synthetases"/>
    <property type="match status" value="1"/>
</dbReference>
<dbReference type="SUPFAM" id="SSF52374">
    <property type="entry name" value="Nucleotidylyl transferase"/>
    <property type="match status" value="1"/>
</dbReference>
<dbReference type="PROSITE" id="PS00178">
    <property type="entry name" value="AA_TRNA_LIGASE_I"/>
    <property type="match status" value="1"/>
</dbReference>
<gene>
    <name evidence="1" type="primary">gltX</name>
    <name type="ordered locus">CTLon_0701</name>
</gene>
<name>SYE_CHLTB</name>
<reference key="1">
    <citation type="journal article" date="2008" name="Genome Res.">
        <title>Chlamydia trachomatis: genome sequence analysis of lymphogranuloma venereum isolates.</title>
        <authorList>
            <person name="Thomson N.R."/>
            <person name="Holden M.T.G."/>
            <person name="Carder C."/>
            <person name="Lennard N."/>
            <person name="Lockey S.J."/>
            <person name="Marsh P."/>
            <person name="Skipp P."/>
            <person name="O'Connor C.D."/>
            <person name="Goodhead I."/>
            <person name="Norbertzcak H."/>
            <person name="Harris B."/>
            <person name="Ormond D."/>
            <person name="Rance R."/>
            <person name="Quail M.A."/>
            <person name="Parkhill J."/>
            <person name="Stephens R.S."/>
            <person name="Clarke I.N."/>
        </authorList>
    </citation>
    <scope>NUCLEOTIDE SEQUENCE [LARGE SCALE GENOMIC DNA]</scope>
    <source>
        <strain>UCH-1/proctitis</strain>
    </source>
</reference>
<proteinExistence type="inferred from homology"/>